<sequence length="264" mass="30385">MKKLKLHGFNNLTKSLSFCIYDICYAKTAEERDGYIAYIDELYNANRLTEILSETCSIIGANILNIARQDYEPQGASVTILVSEEPVDPKLIDKTEHPGPLPETVVAHLDKSHICVHTYPESHPEGGLCTFRADIEVSTCGVISPLKALNYLIHQLESDIVTIDYRVRGFTRDINGMKHFIDHEINSIQNFMSDDMKALYDMVDVNVYQENIFHTKMLLKEFDLKHYMFHTKPEDLTDSERQEITAALWKEMREIYYGRNMPAV</sequence>
<dbReference type="EC" id="4.1.1.50"/>
<dbReference type="EMBL" id="J02804">
    <property type="protein sequence ID" value="AAA24644.1"/>
    <property type="molecule type" value="Genomic_DNA"/>
</dbReference>
<dbReference type="EMBL" id="U00096">
    <property type="protein sequence ID" value="AAC73231.1"/>
    <property type="molecule type" value="Genomic_DNA"/>
</dbReference>
<dbReference type="EMBL" id="AP009048">
    <property type="protein sequence ID" value="BAB96694.1"/>
    <property type="molecule type" value="Genomic_DNA"/>
</dbReference>
<dbReference type="PIR" id="B29778">
    <property type="entry name" value="DCECDM"/>
</dbReference>
<dbReference type="RefSeq" id="NP_414662.1">
    <property type="nucleotide sequence ID" value="NC_000913.3"/>
</dbReference>
<dbReference type="RefSeq" id="WP_000734287.1">
    <property type="nucleotide sequence ID" value="NZ_STEB01000010.1"/>
</dbReference>
<dbReference type="BioGRID" id="4262031">
    <property type="interactions" value="13"/>
</dbReference>
<dbReference type="DIP" id="DIP-47936N"/>
<dbReference type="FunCoup" id="P0A7F6">
    <property type="interactions" value="118"/>
</dbReference>
<dbReference type="IntAct" id="P0A7F6">
    <property type="interactions" value="4"/>
</dbReference>
<dbReference type="STRING" id="511145.b0120"/>
<dbReference type="jPOST" id="P0A7F6"/>
<dbReference type="PaxDb" id="511145-b0120"/>
<dbReference type="EnsemblBacteria" id="AAC73231">
    <property type="protein sequence ID" value="AAC73231"/>
    <property type="gene ID" value="b0120"/>
</dbReference>
<dbReference type="GeneID" id="93777316"/>
<dbReference type="GeneID" id="947719"/>
<dbReference type="KEGG" id="ecj:JW0116"/>
<dbReference type="KEGG" id="eco:b0120"/>
<dbReference type="KEGG" id="ecoc:C3026_00505"/>
<dbReference type="PATRIC" id="fig|1411691.4.peg.2162"/>
<dbReference type="EchoBASE" id="EB0955"/>
<dbReference type="eggNOG" id="COG1586">
    <property type="taxonomic scope" value="Bacteria"/>
</dbReference>
<dbReference type="HOGENOM" id="CLU_092007_0_0_6"/>
<dbReference type="InParanoid" id="P0A7F6"/>
<dbReference type="OMA" id="HVTVHTY"/>
<dbReference type="OrthoDB" id="5290709at2"/>
<dbReference type="PhylomeDB" id="P0A7F6"/>
<dbReference type="BioCyc" id="EcoCyc:SPED-MONOMER"/>
<dbReference type="BioCyc" id="MetaCyc:SPED-MONOMER"/>
<dbReference type="SABIO-RK" id="P0A7F6"/>
<dbReference type="UniPathway" id="UPA00331">
    <property type="reaction ID" value="UER00451"/>
</dbReference>
<dbReference type="PHI-base" id="PHI:9152"/>
<dbReference type="PRO" id="PR:P0A7F6"/>
<dbReference type="Proteomes" id="UP000000625">
    <property type="component" value="Chromosome"/>
</dbReference>
<dbReference type="GO" id="GO:0005829">
    <property type="term" value="C:cytosol"/>
    <property type="evidence" value="ECO:0000314"/>
    <property type="project" value="EcoCyc"/>
</dbReference>
<dbReference type="GO" id="GO:0004014">
    <property type="term" value="F:adenosylmethionine decarboxylase activity"/>
    <property type="evidence" value="ECO:0000314"/>
    <property type="project" value="EcoCyc"/>
</dbReference>
<dbReference type="GO" id="GO:0000287">
    <property type="term" value="F:magnesium ion binding"/>
    <property type="evidence" value="ECO:0000314"/>
    <property type="project" value="EcoCyc"/>
</dbReference>
<dbReference type="GO" id="GO:0097264">
    <property type="term" value="P:self proteolysis"/>
    <property type="evidence" value="ECO:0000314"/>
    <property type="project" value="EcoCyc"/>
</dbReference>
<dbReference type="GO" id="GO:0008295">
    <property type="term" value="P:spermidine biosynthetic process"/>
    <property type="evidence" value="ECO:0000315"/>
    <property type="project" value="EcoCyc"/>
</dbReference>
<dbReference type="FunFam" id="3.60.90.10:FF:000001">
    <property type="entry name" value="S-adenosylmethionine decarboxylase proenzyme"/>
    <property type="match status" value="1"/>
</dbReference>
<dbReference type="Gene3D" id="3.60.90.10">
    <property type="entry name" value="S-adenosylmethionine decarboxylase"/>
    <property type="match status" value="1"/>
</dbReference>
<dbReference type="HAMAP" id="MF_00465">
    <property type="entry name" value="AdoMetDC_2"/>
    <property type="match status" value="1"/>
</dbReference>
<dbReference type="InterPro" id="IPR003826">
    <property type="entry name" value="AdoMetDC_fam_prok"/>
</dbReference>
<dbReference type="InterPro" id="IPR009165">
    <property type="entry name" value="S-AdoMet_deCO2ase_bac"/>
</dbReference>
<dbReference type="InterPro" id="IPR016067">
    <property type="entry name" value="S-AdoMet_deCO2ase_core"/>
</dbReference>
<dbReference type="NCBIfam" id="TIGR03331">
    <property type="entry name" value="SAM_DCase_Eco"/>
    <property type="match status" value="1"/>
</dbReference>
<dbReference type="PANTHER" id="PTHR33866">
    <property type="entry name" value="S-ADENOSYLMETHIONINE DECARBOXYLASE PROENZYME"/>
    <property type="match status" value="1"/>
</dbReference>
<dbReference type="PANTHER" id="PTHR33866:SF1">
    <property type="entry name" value="S-ADENOSYLMETHIONINE DECARBOXYLASE PROENZYME"/>
    <property type="match status" value="1"/>
</dbReference>
<dbReference type="Pfam" id="PF02675">
    <property type="entry name" value="AdoMet_dc"/>
    <property type="match status" value="1"/>
</dbReference>
<dbReference type="PIRSF" id="PIRSF001356">
    <property type="entry name" value="SAM_decarboxylas"/>
    <property type="match status" value="1"/>
</dbReference>
<dbReference type="SUPFAM" id="SSF56276">
    <property type="entry name" value="S-adenosylmethionine decarboxylase"/>
    <property type="match status" value="1"/>
</dbReference>
<accession>P0A7F6</accession>
<accession>P09159</accession>
<evidence type="ECO:0000250" key="1"/>
<evidence type="ECO:0000269" key="2">
    <source>
    </source>
</evidence>
<evidence type="ECO:0000269" key="3">
    <source>
    </source>
</evidence>
<evidence type="ECO:0000269" key="4">
    <source>
    </source>
</evidence>
<evidence type="ECO:0000269" key="5">
    <source>
    </source>
</evidence>
<evidence type="ECO:0000305" key="6"/>
<feature type="chain" id="PRO_0000030043" description="S-adenosylmethionine decarboxylase beta chain">
    <location>
        <begin position="1"/>
        <end position="111"/>
    </location>
</feature>
<feature type="chain" id="PRO_0000030044" description="S-adenosylmethionine decarboxylase alpha chain">
    <location>
        <begin position="112"/>
        <end position="264"/>
    </location>
</feature>
<feature type="active site" description="Schiff-base intermediate with substrate; via pyruvic acid">
    <location>
        <position position="112"/>
    </location>
</feature>
<feature type="active site" description="Proton acceptor; for processing activity" evidence="1">
    <location>
        <position position="117"/>
    </location>
</feature>
<feature type="active site" description="Proton donor; for catalytic activity" evidence="1">
    <location>
        <position position="140"/>
    </location>
</feature>
<feature type="site" description="Cleavage (non-hydrolytic); by autolysis">
    <location>
        <begin position="111"/>
        <end position="112"/>
    </location>
</feature>
<feature type="modified residue" description="Pyruvic acid (Ser); by autocatalysis" evidence="3">
    <location>
        <position position="112"/>
    </location>
</feature>
<gene>
    <name type="primary">speD</name>
    <name type="ordered locus">b0120</name>
    <name type="ordered locus">JW0116</name>
</gene>
<protein>
    <recommendedName>
        <fullName>S-adenosylmethionine decarboxylase proenzyme</fullName>
        <shortName>AdoMetDC</shortName>
        <shortName>SAMDC</shortName>
        <ecNumber>4.1.1.50</ecNumber>
    </recommendedName>
    <component>
        <recommendedName>
            <fullName>S-adenosylmethionine decarboxylase beta chain</fullName>
        </recommendedName>
    </component>
    <component>
        <recommendedName>
            <fullName>S-adenosylmethionine decarboxylase alpha chain</fullName>
        </recommendedName>
    </component>
</protein>
<proteinExistence type="evidence at protein level"/>
<comment type="function">
    <text>Catalyzes the decarboxylation of S-adenosylmethionine to S-adenosylmethioninamine (dcAdoMet), the propylamine donor required for the synthesis of the polyamines spermine and spermidine from the diamine putrescine.</text>
</comment>
<comment type="catalytic activity">
    <reaction evidence="5">
        <text>S-adenosyl-L-methionine + H(+) = S-adenosyl 3-(methylsulfanyl)propylamine + CO2</text>
        <dbReference type="Rhea" id="RHEA:15981"/>
        <dbReference type="ChEBI" id="CHEBI:15378"/>
        <dbReference type="ChEBI" id="CHEBI:16526"/>
        <dbReference type="ChEBI" id="CHEBI:57443"/>
        <dbReference type="ChEBI" id="CHEBI:59789"/>
        <dbReference type="EC" id="4.1.1.50"/>
    </reaction>
</comment>
<comment type="cofactor">
    <cofactor evidence="3 4 5">
        <name>pyruvate</name>
        <dbReference type="ChEBI" id="CHEBI:15361"/>
    </cofactor>
    <text evidence="3 4 5">Binds 1 pyruvoyl group covalently per subunit.</text>
</comment>
<comment type="activity regulation">
    <text evidence="2 4 5">Allosterically activated by metal cations, which are absolutely required for activity. The presumed physiological activator is Mg(2+), but can also be activated in vitro by other divalent cations such as Mn(2+), Fe(2+) and Ca(2+), by the monovalent cation Li(+), and by trivalent cations such as Eu(3+), Tb(3+) and Gd(3+). Competitively inhibited by methylglyoxal bis-guanylhydrazone. Also inhibited by Zn(2+), inhibition may be due to interaction with the active site cysteine. Inactivated by treatment with the imine reductant NaCNBH(3) only in the presence of substrate.</text>
</comment>
<comment type="biophysicochemical properties">
    <kinetics>
        <KM evidence="5">60 uM for S-adenosyl-L-methionine (at 25 degrees Celsius in the presence of 0.01 M MgCl(2))</KM>
        <Vmax evidence="5">3.8 umol/min/mg enzyme (at 25 degrees Celsius in the presence of 0.01M MgCl(2))</Vmax>
        <Vmax evidence="5">6.8 umol/min/mg enzyme (at 37 degrees Celsius in the presence of 0.1M MgCl(2))</Vmax>
    </kinetics>
    <phDependence>
        <text evidence="2 5">Optimum pH is 7.4. Active from pH 6.7 to 8.5.</text>
    </phDependence>
</comment>
<comment type="pathway">
    <text>Amine and polyamine biosynthesis; S-adenosylmethioninamine biosynthesis; S-adenosylmethioninamine from S-adenosyl-L-methionine: step 1/1.</text>
</comment>
<comment type="subunit">
    <text evidence="4">Heterooctamer of four alpha and four beta chains arranged as a tetramer of alpha/beta heterodimers.</text>
</comment>
<comment type="PTM">
    <text evidence="3 4">Is synthesized initially as an inactive proenzyme. Formation of the active enzyme involves a self-maturation process in which the active site pyruvoyl group is generated from an internal serine residue via an autocatalytic post-translational modification. Two non-identical subunits are generated from the proenzyme in this reaction, and the pyruvate is formed at the N-terminus of the alpha chain, which is derived from the carboxyl end of the proenzyme. The post-translation cleavage follows an unusual pathway, termed non-hydrolytic serinolysis, in which the side chain hydroxyl group of the serine supplies its oxygen atom to form the C-terminus of the beta chain, while the remainder of the serine residue undergoes an oxidative deamination to produce ammonia and the pyruvoyl group blocking the N-terminus of the alpha chain.</text>
</comment>
<comment type="miscellaneous">
    <text>Spermidine-deficient mutants show a small decrease in growth rate and increased sensibility to superoxide toxicity.</text>
</comment>
<comment type="similarity">
    <text evidence="6">Belongs to the prokaryotic AdoMetDC family. Type 2 subfamily.</text>
</comment>
<name>SPED_ECOLI</name>
<organism>
    <name type="scientific">Escherichia coli (strain K12)</name>
    <dbReference type="NCBI Taxonomy" id="83333"/>
    <lineage>
        <taxon>Bacteria</taxon>
        <taxon>Pseudomonadati</taxon>
        <taxon>Pseudomonadota</taxon>
        <taxon>Gammaproteobacteria</taxon>
        <taxon>Enterobacterales</taxon>
        <taxon>Enterobacteriaceae</taxon>
        <taxon>Escherichia</taxon>
    </lineage>
</organism>
<reference key="1">
    <citation type="journal article" date="1987" name="J. Biol. Chem.">
        <title>The speEspeD operon of Escherichia coli. Formation and processing of a proenzyme form of S-adenosylmethionine decarboxylase.</title>
        <authorList>
            <person name="Tabor C.W."/>
            <person name="Tabor H."/>
        </authorList>
    </citation>
    <scope>NUCLEOTIDE SEQUENCE [GENOMIC DNA]</scope>
    <scope>SELF-PROCESSING</scope>
    <scope>CLEAVAGE SITE</scope>
    <scope>COFACTOR</scope>
    <scope>PYRUVATE FORMATION AT SER-112</scope>
</reference>
<reference key="2">
    <citation type="journal article" date="1994" name="Nucleic Acids Res.">
        <title>Systematic sequencing of the Escherichia coli genome: analysis of the 2.4-4.1 min (110,917-193,643 bp) region.</title>
        <authorList>
            <person name="Fujita N."/>
            <person name="Mori H."/>
            <person name="Yura T."/>
            <person name="Ishihama A."/>
        </authorList>
    </citation>
    <scope>NUCLEOTIDE SEQUENCE [LARGE SCALE GENOMIC DNA]</scope>
    <source>
        <strain>K12 / W3110 / ATCC 27325 / DSM 5911</strain>
    </source>
</reference>
<reference key="3">
    <citation type="journal article" date="1997" name="Science">
        <title>The complete genome sequence of Escherichia coli K-12.</title>
        <authorList>
            <person name="Blattner F.R."/>
            <person name="Plunkett G. III"/>
            <person name="Bloch C.A."/>
            <person name="Perna N.T."/>
            <person name="Burland V."/>
            <person name="Riley M."/>
            <person name="Collado-Vides J."/>
            <person name="Glasner J.D."/>
            <person name="Rode C.K."/>
            <person name="Mayhew G.F."/>
            <person name="Gregor J."/>
            <person name="Davis N.W."/>
            <person name="Kirkpatrick H.A."/>
            <person name="Goeden M.A."/>
            <person name="Rose D.J."/>
            <person name="Mau B."/>
            <person name="Shao Y."/>
        </authorList>
    </citation>
    <scope>NUCLEOTIDE SEQUENCE [LARGE SCALE GENOMIC DNA]</scope>
    <source>
        <strain>K12 / MG1655 / ATCC 47076</strain>
    </source>
</reference>
<reference key="4">
    <citation type="journal article" date="2006" name="Mol. Syst. Biol.">
        <title>Highly accurate genome sequences of Escherichia coli K-12 strains MG1655 and W3110.</title>
        <authorList>
            <person name="Hayashi K."/>
            <person name="Morooka N."/>
            <person name="Yamamoto Y."/>
            <person name="Fujita K."/>
            <person name="Isono K."/>
            <person name="Choi S."/>
            <person name="Ohtsubo E."/>
            <person name="Baba T."/>
            <person name="Wanner B.L."/>
            <person name="Mori H."/>
            <person name="Horiuchi T."/>
        </authorList>
    </citation>
    <scope>NUCLEOTIDE SEQUENCE [LARGE SCALE GENOMIC DNA]</scope>
    <source>
        <strain>K12 / W3110 / ATCC 27325 / DSM 5911</strain>
    </source>
</reference>
<reference key="5">
    <citation type="journal article" date="1987" name="J. Biol. Chem.">
        <title>Escherichia coli S-adenosylmethionine decarboxylase. Subunit structure, reductive amination, and NH2-terminal sequences.</title>
        <authorList>
            <person name="Anton D.L."/>
            <person name="Kutny R."/>
        </authorList>
    </citation>
    <scope>PROTEIN SEQUENCE OF 1-21 AND 112-143</scope>
    <scope>SELF-PROCESSING</scope>
    <scope>CLEAVAGE SITE</scope>
    <scope>COFACTOR</scope>
    <scope>ACTIVITY REGULATION</scope>
    <scope>SUBUNIT</scope>
</reference>
<reference key="6">
    <citation type="journal article" date="1982" name="J. Biol. Chem.">
        <title>S-adenosylmethionine decarboxylase of Escherichia coli. Studies on the covalently linked pyruvate required for activity.</title>
        <authorList>
            <person name="Markham G.D."/>
            <person name="Tabor C.W."/>
            <person name="Tabor H."/>
        </authorList>
    </citation>
    <scope>CATALYTIC ACTIVITY</scope>
    <scope>COFACTOR</scope>
    <scope>ACTIVITY REGULATION</scope>
    <scope>BIOPHYSICOCHEMICAL PROPERTIES</scope>
    <scope>SCHIFF BASE FORMATION</scope>
    <source>
        <strain>K12</strain>
    </source>
</reference>
<reference key="7">
    <citation type="journal article" date="1990" name="Proc. Natl. Acad. Sci. U.S.A.">
        <title>Paraquat toxicity is increased in Escherichia coli defective in the synthesis of polyamines.</title>
        <authorList>
            <person name="Minton K.W."/>
            <person name="Tabor H."/>
            <person name="Tabor C.W."/>
        </authorList>
    </citation>
    <scope>SENSITIVITY OF MUTANTS</scope>
</reference>
<reference key="8">
    <citation type="journal article" date="2007" name="Biochemistry">
        <title>Metal ion activation of S-adenosylmethionine decarboxylase reflects cation charge density.</title>
        <authorList>
            <person name="Lu Z.J."/>
            <person name="Markham G.D."/>
        </authorList>
    </citation>
    <scope>ALLOSTERIC METAL ION ACTIVATION</scope>
    <scope>ACTIVITY REGULATION</scope>
    <scope>PH DEPENDENCE</scope>
</reference>
<keyword id="KW-0021">Allosteric enzyme</keyword>
<keyword id="KW-0068">Autocatalytic cleavage</keyword>
<keyword id="KW-0210">Decarboxylase</keyword>
<keyword id="KW-0903">Direct protein sequencing</keyword>
<keyword id="KW-0456">Lyase</keyword>
<keyword id="KW-0460">Magnesium</keyword>
<keyword id="KW-0620">Polyamine biosynthesis</keyword>
<keyword id="KW-0670">Pyruvate</keyword>
<keyword id="KW-1185">Reference proteome</keyword>
<keyword id="KW-0949">S-adenosyl-L-methionine</keyword>
<keyword id="KW-0704">Schiff base</keyword>
<keyword id="KW-0745">Spermidine biosynthesis</keyword>
<keyword id="KW-0865">Zymogen</keyword>